<feature type="chain" id="PRO_0000106166" description="Putative gene 60 protein">
    <location>
        <begin position="1"/>
        <end position="73"/>
    </location>
</feature>
<feature type="strand" evidence="1">
    <location>
        <begin position="14"/>
        <end position="20"/>
    </location>
</feature>
<feature type="strand" evidence="1">
    <location>
        <begin position="25"/>
        <end position="27"/>
    </location>
</feature>
<feature type="strand" evidence="1">
    <location>
        <begin position="31"/>
        <end position="37"/>
    </location>
</feature>
<feature type="helix" evidence="1">
    <location>
        <begin position="52"/>
        <end position="62"/>
    </location>
</feature>
<feature type="turn" evidence="1">
    <location>
        <begin position="63"/>
        <end position="65"/>
    </location>
</feature>
<feature type="strand" evidence="1">
    <location>
        <begin position="68"/>
        <end position="70"/>
    </location>
</feature>
<name>GP60_BPSP1</name>
<organismHost>
    <name type="scientific">Bacillus subtilis</name>
    <dbReference type="NCBI Taxonomy" id="1423"/>
</organismHost>
<dbReference type="EMBL" id="AF031901">
    <property type="protein sequence ID" value="AAC29029.1"/>
    <property type="molecule type" value="Genomic_DNA"/>
</dbReference>
<dbReference type="RefSeq" id="YP_002300306.1">
    <property type="nucleotide sequence ID" value="NC_011421.1"/>
</dbReference>
<dbReference type="PDB" id="7XML">
    <property type="method" value="EM"/>
    <property type="resolution" value="3.20 A"/>
    <property type="chains" value="C/D=1-73"/>
</dbReference>
<dbReference type="PDBsum" id="7XML"/>
<dbReference type="EMDB" id="EMD-33300"/>
<dbReference type="SMR" id="O48414"/>
<dbReference type="GeneID" id="7009019"/>
<dbReference type="KEGG" id="vg:7009019"/>
<evidence type="ECO:0007829" key="1">
    <source>
        <dbReference type="PDB" id="7XML"/>
    </source>
</evidence>
<organism>
    <name type="scientific">Bacillus phage SP01</name>
    <name type="common">Bacteriophage SP01</name>
    <dbReference type="NCBI Taxonomy" id="2884427"/>
    <lineage>
        <taxon>Viruses</taxon>
        <taxon>Duplodnaviria</taxon>
        <taxon>Heunggongvirae</taxon>
        <taxon>Uroviricota</taxon>
        <taxon>Caudoviricetes</taxon>
        <taxon>Herelleviridae</taxon>
        <taxon>Spounavirinae</taxon>
        <taxon>Okubovirus</taxon>
        <taxon>Okubovirus SPO1</taxon>
    </lineage>
</organism>
<protein>
    <recommendedName>
        <fullName>Putative gene 60 protein</fullName>
    </recommendedName>
</protein>
<reference key="1">
    <citation type="journal article" date="1998" name="Virology">
        <title>Genes and regulatory sites of the 'host-takeover module' in the terminal redundancy of Bacillus subtilis bacteriophage SPO1.</title>
        <authorList>
            <person name="Stewart C.R."/>
            <person name="Gaslightwala I."/>
            <person name="Hinata K."/>
            <person name="Krolikowski K.A."/>
            <person name="Needleman D.S."/>
            <person name="Peng A.S.-Y."/>
            <person name="Peterman M.A."/>
            <person name="Tobias A."/>
            <person name="Wei P."/>
        </authorList>
    </citation>
    <scope>NUCLEOTIDE SEQUENCE [GENOMIC DNA]</scope>
</reference>
<accession>O48414</accession>
<keyword id="KW-0002">3D-structure</keyword>
<gene>
    <name type="primary">60</name>
</gene>
<sequence length="73" mass="8555">MLNQVEVLREEYVEGYVVQMWRRNPSNAPVIEVFTEDNLEEGIIPEYVTANDDTFDRIVDAVEFGYLEELELV</sequence>
<proteinExistence type="evidence at protein level"/>